<organism>
    <name type="scientific">Danio rerio</name>
    <name type="common">Zebrafish</name>
    <name type="synonym">Brachydanio rerio</name>
    <dbReference type="NCBI Taxonomy" id="7955"/>
    <lineage>
        <taxon>Eukaryota</taxon>
        <taxon>Metazoa</taxon>
        <taxon>Chordata</taxon>
        <taxon>Craniata</taxon>
        <taxon>Vertebrata</taxon>
        <taxon>Euteleostomi</taxon>
        <taxon>Actinopterygii</taxon>
        <taxon>Neopterygii</taxon>
        <taxon>Teleostei</taxon>
        <taxon>Ostariophysi</taxon>
        <taxon>Cypriniformes</taxon>
        <taxon>Danionidae</taxon>
        <taxon>Danioninae</taxon>
        <taxon>Danio</taxon>
    </lineage>
</organism>
<comment type="function">
    <text evidence="1">Devoided of intrinsic deacetylase activity, promotes the deacetylation of lysine residues on the N-terminal part of the core histones (H2A, H2B, H3 and H4) by recruiting other histone deacetylases. Histone deacetylation gives a tag for epigenetic repression and plays an important role in transcriptional regulation, cell cycle progression and developmental events. Represses MEF2-dependent transcription (By similarity).</text>
</comment>
<comment type="catalytic activity">
    <reaction>
        <text>N(6)-acetyl-L-lysyl-[histone] + H2O = L-lysyl-[histone] + acetate</text>
        <dbReference type="Rhea" id="RHEA:58196"/>
        <dbReference type="Rhea" id="RHEA-COMP:9845"/>
        <dbReference type="Rhea" id="RHEA-COMP:11338"/>
        <dbReference type="ChEBI" id="CHEBI:15377"/>
        <dbReference type="ChEBI" id="CHEBI:29969"/>
        <dbReference type="ChEBI" id="CHEBI:30089"/>
        <dbReference type="ChEBI" id="CHEBI:61930"/>
        <dbReference type="EC" id="3.5.1.98"/>
    </reaction>
</comment>
<comment type="subunit">
    <text evidence="1">Homodimer. Interacts with mef2 (By similarity).</text>
</comment>
<comment type="subcellular location">
    <subcellularLocation>
        <location evidence="1">Nucleus</location>
    </subcellularLocation>
</comment>
<comment type="alternative products">
    <event type="alternative splicing"/>
    <isoform>
        <id>Q6PBI4-1</id>
        <name>1</name>
        <sequence type="displayed"/>
    </isoform>
    <isoform>
        <id>Q6PBI4-2</id>
        <name>2</name>
        <sequence type="described" ref="VSP_029171 VSP_029172"/>
    </isoform>
</comment>
<comment type="similarity">
    <text evidence="4">Belongs to the histone deacetylase family. HD type 2 subfamily.</text>
</comment>
<comment type="sequence caution" evidence="4">
    <conflict type="frameshift">
        <sequence resource="EMBL-CDS" id="AAQ97977"/>
    </conflict>
</comment>
<comment type="sequence caution" evidence="4">
    <conflict type="miscellaneous discrepancy">
        <sequence resource="EMBL-CDS" id="AAQ97977"/>
    </conflict>
    <text>Intron retention.</text>
</comment>
<feature type="chain" id="PRO_0000280537" description="Histone deacetylase 9-B">
    <location>
        <begin position="1"/>
        <end position="582"/>
    </location>
</feature>
<feature type="region of interest" description="Interaction with mef2" evidence="1">
    <location>
        <begin position="146"/>
        <end position="195"/>
    </location>
</feature>
<feature type="region of interest" description="Disordered" evidence="2">
    <location>
        <begin position="189"/>
        <end position="254"/>
    </location>
</feature>
<feature type="region of interest" description="Disordered" evidence="2">
    <location>
        <begin position="270"/>
        <end position="314"/>
    </location>
</feature>
<feature type="region of interest" description="Disordered" evidence="2">
    <location>
        <begin position="409"/>
        <end position="447"/>
    </location>
</feature>
<feature type="region of interest" description="Disordered" evidence="2">
    <location>
        <begin position="496"/>
        <end position="567"/>
    </location>
</feature>
<feature type="compositionally biased region" description="Polar residues" evidence="2">
    <location>
        <begin position="189"/>
        <end position="205"/>
    </location>
</feature>
<feature type="compositionally biased region" description="Basic and acidic residues" evidence="2">
    <location>
        <begin position="213"/>
        <end position="224"/>
    </location>
</feature>
<feature type="compositionally biased region" description="Basic and acidic residues" evidence="2">
    <location>
        <begin position="238"/>
        <end position="253"/>
    </location>
</feature>
<feature type="compositionally biased region" description="Low complexity" evidence="2">
    <location>
        <begin position="270"/>
        <end position="289"/>
    </location>
</feature>
<feature type="compositionally biased region" description="Polar residues" evidence="2">
    <location>
        <begin position="295"/>
        <end position="314"/>
    </location>
</feature>
<feature type="splice variant" id="VSP_029171" description="In isoform 2." evidence="3">
    <location>
        <begin position="140"/>
        <end position="142"/>
    </location>
</feature>
<feature type="splice variant" id="VSP_029172" description="In isoform 2." evidence="3">
    <location>
        <begin position="182"/>
        <end position="183"/>
    </location>
</feature>
<feature type="sequence conflict" description="In Ref. 1; AAQ97977." evidence="4" ref="1">
    <original>E</original>
    <variation>K</variation>
    <location>
        <position position="306"/>
    </location>
</feature>
<feature type="sequence conflict" description="In Ref. 1; AAQ97977." evidence="4" ref="1">
    <original>AV</original>
    <variation>PD</variation>
    <location>
        <begin position="364"/>
        <end position="365"/>
    </location>
</feature>
<feature type="sequence conflict" description="In Ref. 1; AAQ97977." evidence="4" ref="1">
    <original>S</original>
    <variation>I</variation>
    <location>
        <position position="389"/>
    </location>
</feature>
<feature type="sequence conflict" description="In Ref. 1; AAQ97977." evidence="4" ref="1">
    <original>P</original>
    <variation>T</variation>
    <location>
        <position position="449"/>
    </location>
</feature>
<keyword id="KW-0025">Alternative splicing</keyword>
<keyword id="KW-0156">Chromatin regulator</keyword>
<keyword id="KW-0378">Hydrolase</keyword>
<keyword id="KW-0539">Nucleus</keyword>
<keyword id="KW-1185">Reference proteome</keyword>
<keyword id="KW-0678">Repressor</keyword>
<keyword id="KW-0804">Transcription</keyword>
<keyword id="KW-0805">Transcription regulation</keyword>
<evidence type="ECO:0000250" key="1"/>
<evidence type="ECO:0000256" key="2">
    <source>
        <dbReference type="SAM" id="MobiDB-lite"/>
    </source>
</evidence>
<evidence type="ECO:0000303" key="3">
    <source>
    </source>
</evidence>
<evidence type="ECO:0000305" key="4"/>
<protein>
    <recommendedName>
        <fullName>Histone deacetylase 9-B</fullName>
        <ecNumber>3.5.1.98</ecNumber>
    </recommendedName>
</protein>
<reference key="1">
    <citation type="journal article" date="2004" name="Proc. Natl. Acad. Sci. U.S.A.">
        <title>Hematopoietic gene expression profile in zebrafish kidney marrow.</title>
        <authorList>
            <person name="Song H.-D."/>
            <person name="Sun X.-J."/>
            <person name="Deng M."/>
            <person name="Zhang G.-W."/>
            <person name="Zhou Y."/>
            <person name="Wu X.-Y."/>
            <person name="Sheng Y."/>
            <person name="Chen Y."/>
            <person name="Ruan Z."/>
            <person name="Jiang C.-L."/>
            <person name="Fan H.-Y."/>
            <person name="Zon L.I."/>
            <person name="Kanki J.P."/>
            <person name="Liu T.X."/>
            <person name="Look A.T."/>
            <person name="Chen Z."/>
        </authorList>
    </citation>
    <scope>NUCLEOTIDE SEQUENCE [LARGE SCALE MRNA] (ISOFORM 2)</scope>
    <source>
        <tissue>Kidney marrow</tissue>
    </source>
</reference>
<reference key="2">
    <citation type="submission" date="2003-10" db="EMBL/GenBank/DDBJ databases">
        <authorList>
            <consortium name="NIH - Zebrafish Gene Collection (ZGC) project"/>
        </authorList>
    </citation>
    <scope>NUCLEOTIDE SEQUENCE [LARGE SCALE MRNA] (ISOFORM 1)</scope>
    <source>
        <tissue>Retina</tissue>
    </source>
</reference>
<gene>
    <name type="primary">hdac9b</name>
    <name type="synonym">hdac9</name>
</gene>
<name>HDA9B_DANRE</name>
<proteinExistence type="evidence at transcript level"/>
<accession>Q6PBI4</accession>
<accession>Q6TEP8</accession>
<dbReference type="EC" id="3.5.1.98"/>
<dbReference type="EMBL" id="AY423001">
    <property type="protein sequence ID" value="AAQ97977.1"/>
    <property type="status" value="ALT_SEQ"/>
    <property type="molecule type" value="mRNA"/>
</dbReference>
<dbReference type="EMBL" id="BC059696">
    <property type="protein sequence ID" value="AAH59696.1"/>
    <property type="molecule type" value="mRNA"/>
</dbReference>
<dbReference type="RefSeq" id="NP_957110.2">
    <molecule id="Q6PBI4-1"/>
    <property type="nucleotide sequence ID" value="NM_200816.2"/>
</dbReference>
<dbReference type="SMR" id="Q6PBI4"/>
<dbReference type="FunCoup" id="Q6PBI4">
    <property type="interactions" value="15"/>
</dbReference>
<dbReference type="STRING" id="7955.ENSDARP00000073615"/>
<dbReference type="PaxDb" id="7955-ENSDARP00000073611"/>
<dbReference type="GeneID" id="393789"/>
<dbReference type="KEGG" id="dre:393789"/>
<dbReference type="AGR" id="ZFIN:ZDB-GENE-040109-7"/>
<dbReference type="CTD" id="393789"/>
<dbReference type="ZFIN" id="ZDB-GENE-040109-7">
    <property type="gene designation" value="hdac9b"/>
</dbReference>
<dbReference type="eggNOG" id="KOG1343">
    <property type="taxonomic scope" value="Eukaryota"/>
</dbReference>
<dbReference type="InParanoid" id="Q6PBI4"/>
<dbReference type="OrthoDB" id="5232919at2759"/>
<dbReference type="PhylomeDB" id="Q6PBI4"/>
<dbReference type="PRO" id="PR:Q6PBI4"/>
<dbReference type="Proteomes" id="UP000000437">
    <property type="component" value="Chromosome 16"/>
</dbReference>
<dbReference type="GO" id="GO:0005634">
    <property type="term" value="C:nucleus"/>
    <property type="evidence" value="ECO:0007669"/>
    <property type="project" value="UniProtKB-SubCell"/>
</dbReference>
<dbReference type="GO" id="GO:0141221">
    <property type="term" value="F:histone deacetylase activity, hydrolytic mechanism"/>
    <property type="evidence" value="ECO:0007669"/>
    <property type="project" value="UniProtKB-EC"/>
</dbReference>
<dbReference type="GO" id="GO:0001525">
    <property type="term" value="P:angiogenesis"/>
    <property type="evidence" value="ECO:0000315"/>
    <property type="project" value="ZFIN"/>
</dbReference>
<dbReference type="GO" id="GO:0006325">
    <property type="term" value="P:chromatin organization"/>
    <property type="evidence" value="ECO:0007669"/>
    <property type="project" value="UniProtKB-KW"/>
</dbReference>
<dbReference type="GO" id="GO:0001945">
    <property type="term" value="P:lymph vessel development"/>
    <property type="evidence" value="ECO:0000315"/>
    <property type="project" value="ZFIN"/>
</dbReference>
<dbReference type="GO" id="GO:0060319">
    <property type="term" value="P:primitive erythrocyte differentiation"/>
    <property type="evidence" value="ECO:0000315"/>
    <property type="project" value="ZFIN"/>
</dbReference>
<dbReference type="GO" id="GO:0060215">
    <property type="term" value="P:primitive hemopoiesis"/>
    <property type="evidence" value="ECO:0000315"/>
    <property type="project" value="ZFIN"/>
</dbReference>
<dbReference type="GO" id="GO:0001944">
    <property type="term" value="P:vasculature development"/>
    <property type="evidence" value="ECO:0000315"/>
    <property type="project" value="ZFIN"/>
</dbReference>
<dbReference type="CDD" id="cd10163">
    <property type="entry name" value="ClassIIa_HDAC9_Gln-rich-N"/>
    <property type="match status" value="1"/>
</dbReference>
<dbReference type="Gene3D" id="6.10.250.1550">
    <property type="match status" value="1"/>
</dbReference>
<dbReference type="InterPro" id="IPR024643">
    <property type="entry name" value="Hist_deacetylase_Gln_rich_N"/>
</dbReference>
<dbReference type="PANTHER" id="PTHR45364:SF11">
    <property type="entry name" value="HISTONE DEACETYLASE 9"/>
    <property type="match status" value="1"/>
</dbReference>
<dbReference type="PANTHER" id="PTHR45364">
    <property type="entry name" value="HISTONE DEACETYLASE 9-RELATED"/>
    <property type="match status" value="1"/>
</dbReference>
<dbReference type="Pfam" id="PF12203">
    <property type="entry name" value="HDAC4_Gln"/>
    <property type="match status" value="1"/>
</dbReference>
<sequence>MHNVNNSVDIKPEVPLALDPGSPLDLRTDIRMQGSASEVTVWERQLQQELLLIQKQQQIQKQLLITEFQKQHENLVRQHQAQIQEHLKLQQELHVMKQQQEQLEKERKLELQSQERELERHRREQQVLVLRNRERTRESLTGAVASNEVKQKLQEFLLSKSTKDITLNGIPQKITQSSKLWYTASHHTSLEQSSPPLGGASSSCKISLPSPQDYRDDFPLRKTVSEPNLKVRSRLKQKVAERRSSPLLRRKEGNIMTPFKKRALELLESTASSSAPGSGPSSPNGACSALGAENGPSSLPVTTRTERWPSQSRLLGPESSVSMLNLYTSPSLPNISLGFSAASSPISAALGLQEKHVDNGAVSAVIQGLPTQLLGPVPLSVMETKVSSSHQALLQHLLQKEQLRHQKILSSGQSPVHPPSPLAMMENSPSSTRPKLPRHRPLNRTQSAPLPQSTLAQLVIQQQHQNFLEKQKQYQQQVHINKMLSKSIEQLRQPNVHLQESEEEEGEDCQEHAMQEESSPSGGVIRKHSPQNTSRSPTIPLDSHPGVIRVKEEPGASDDETMANQSSYIHQVKGRMVIQAMI</sequence>